<comment type="function">
    <text>This is a receptor for the anterior pituitary hormone prolactin.</text>
</comment>
<comment type="subunit">
    <text evidence="1">Interacts with SMARCA1. Interacts with NEK3 and VAV2 and this interaction is prolactin-dependent.</text>
</comment>
<comment type="interaction">
    <interactant intactId="EBI-7737664">
        <id>Q08501</id>
    </interactant>
    <interactant intactId="EBI-7737644">
        <id>Q99490-2</id>
        <label>AGAP2</label>
    </interactant>
    <organismsDiffer>true</organismsDiffer>
    <experiments>2</experiments>
</comment>
<comment type="subcellular location">
    <subcellularLocation>
        <location>Membrane</location>
        <topology>Single-pass type I membrane protein</topology>
    </subcellularLocation>
</comment>
<comment type="alternative products">
    <event type="alternative splicing"/>
    <isoform>
        <id>Q08501-1</id>
        <name>PRL-R3</name>
        <sequence type="displayed"/>
    </isoform>
    <isoform>
        <id>Q08501-2</id>
        <name>PRL-R1</name>
        <sequence type="described" ref="VSP_001723 VSP_001724"/>
    </isoform>
    <isoform>
        <id>Q08501-3</id>
        <name>PRL-R2</name>
        <sequence type="described" ref="VSP_001721 VSP_001722"/>
    </isoform>
</comment>
<comment type="domain">
    <text>The WSXWS motif appears to be necessary for proper protein folding and thereby efficient intracellular transport and cell-surface receptor binding.</text>
</comment>
<comment type="domain">
    <text>The box 1 motif is required for JAK interaction and/or activation.</text>
</comment>
<comment type="similarity">
    <text evidence="6">Belongs to the type I cytokine receptor family. Type 1 subfamily.</text>
</comment>
<keyword id="KW-0025">Alternative splicing</keyword>
<keyword id="KW-1015">Disulfide bond</keyword>
<keyword id="KW-0325">Glycoprotein</keyword>
<keyword id="KW-0472">Membrane</keyword>
<keyword id="KW-0479">Metal-binding</keyword>
<keyword id="KW-0675">Receptor</keyword>
<keyword id="KW-1185">Reference proteome</keyword>
<keyword id="KW-0677">Repeat</keyword>
<keyword id="KW-0732">Signal</keyword>
<keyword id="KW-0812">Transmembrane</keyword>
<keyword id="KW-1133">Transmembrane helix</keyword>
<keyword id="KW-0862">Zinc</keyword>
<proteinExistence type="evidence at protein level"/>
<reference key="1">
    <citation type="journal article" date="1993" name="Gene">
        <title>Cloning and sequencing of the cDNA encoding the murine mammary gland long-form prolactin receptor.</title>
        <authorList>
            <person name="Moore R.C."/>
            <person name="Oka T."/>
        </authorList>
    </citation>
    <scope>NUCLEOTIDE SEQUENCE [MRNA] (ISOFORM PRL-R3)</scope>
    <source>
        <strain>C3H/HeJ</strain>
        <tissue>Mammary gland</tissue>
    </source>
</reference>
<reference key="2">
    <citation type="journal article" date="1993" name="Endocrinology">
        <title>Changes in prolactin receptor expression during pregnancy in the mouse ovary.</title>
        <authorList>
            <person name="Clarke D.L."/>
            <person name="Linzer D.I.H."/>
        </authorList>
    </citation>
    <scope>NUCLEOTIDE SEQUENCE [MRNA] (ISOFORM PRL-R3)</scope>
    <source>
        <strain>Swiss Webster</strain>
        <tissue>Liver</tissue>
    </source>
</reference>
<reference key="3">
    <citation type="submission" date="1992-07" db="EMBL/GenBank/DDBJ databases">
        <authorList>
            <person name="Sasaki M."/>
        </authorList>
    </citation>
    <scope>NUCLEOTIDE SEQUENCE [MRNA] (ISOFORM PRL-R3)</scope>
</reference>
<reference key="4">
    <citation type="submission" date="1993-06" db="EMBL/GenBank/DDBJ databases">
        <authorList>
            <person name="Edery M."/>
            <person name="Pezet A."/>
            <person name="Nandi S."/>
            <person name="Kelly P.A."/>
        </authorList>
    </citation>
    <scope>NUCLEOTIDE SEQUENCE [MRNA] (ISOFORM PRL-R3)</scope>
    <source>
        <strain>BALB/cJ</strain>
        <tissue>Mammary gland</tissue>
    </source>
</reference>
<reference key="5">
    <citation type="journal article" date="1989" name="Mol. Endocrinol.">
        <title>Expression of multiple forms of the prolactin receptor in mouse liver.</title>
        <authorList>
            <person name="Davis J.A."/>
            <person name="Linzer D.I.H."/>
        </authorList>
    </citation>
    <scope>NUCLEOTIDE SEQUENCE [MRNA] (ISOFORMS PRL-R2 AND PRL-R1)</scope>
    <source>
        <strain>Swiss Webster</strain>
        <tissue>Liver</tissue>
    </source>
</reference>
<name>PRLR_MOUSE</name>
<sequence length="608" mass="68241">MSSALAYMLLVLSISLLNGQSPPGKPEIHKCRSPDKETFTCWWNPGSDGGLPTNYSLTYSKEGEKNTYECPDYKTSGPNSCFFSKQYTSIWKIYIITVNATNEMGSSTSDPLYVDVTYIVEPEPPRNLTLEVKQLKDKKTYLWVKWLPPTITDVKTGWFTMEYEIRLKSEEADEWEIHFTGHQTQFKVFDLYPGQKYLVQTRCKPDHGYWSRWGQEKSIEIPNDFTLKDTTVWIIVAVLSAVICLIMVWAVALKGYSMMTCIFPPVPGPKIKGFDTHLLEKGKSEELLSALGCQDFPPTSDCEDLLVEFLEVDDNEDERLMPSHSKEYPGQGVKPTHLDPDSDSGHGSYDSHSLLSEKCEEPQAYPPAFHIPEITEKPENPEANIPPTPNPQNNTPNCHTDTSKSTTWPLPPGQHTRRSPYHSIADVCKLAGSPGDTLDSFLDKAEENVLKLSEDAGEEEVAVQEGAKSFPSDKQNTSWPPLQEKGPIVYAKPPDYVEIHKVNKDGVLSLLPKQRENHQTENPGVPETSKEYAKVSGVTDNNILVLVPDSRAQNTALLEESAKKVPPSLEQNQSEKDLASFTATSSNCRLQLGRLDYLDPTCFMHSFH</sequence>
<organism>
    <name type="scientific">Mus musculus</name>
    <name type="common">Mouse</name>
    <dbReference type="NCBI Taxonomy" id="10090"/>
    <lineage>
        <taxon>Eukaryota</taxon>
        <taxon>Metazoa</taxon>
        <taxon>Chordata</taxon>
        <taxon>Craniata</taxon>
        <taxon>Vertebrata</taxon>
        <taxon>Euteleostomi</taxon>
        <taxon>Mammalia</taxon>
        <taxon>Eutheria</taxon>
        <taxon>Euarchontoglires</taxon>
        <taxon>Glires</taxon>
        <taxon>Rodentia</taxon>
        <taxon>Myomorpha</taxon>
        <taxon>Muroidea</taxon>
        <taxon>Muridae</taxon>
        <taxon>Murinae</taxon>
        <taxon>Mus</taxon>
        <taxon>Mus</taxon>
    </lineage>
</organism>
<accession>Q08501</accession>
<accession>P15212</accession>
<accession>P15213</accession>
<accession>Q62099</accession>
<gene>
    <name type="primary">Prlr</name>
</gene>
<feature type="signal peptide" evidence="2">
    <location>
        <begin position="1"/>
        <end position="19"/>
    </location>
</feature>
<feature type="chain" id="PRO_0000010978" description="Prolactin receptor">
    <location>
        <begin position="20"/>
        <end position="608"/>
    </location>
</feature>
<feature type="topological domain" description="Extracellular" evidence="1">
    <location>
        <begin position="20"/>
        <end position="229"/>
    </location>
</feature>
<feature type="transmembrane region" description="Helical" evidence="1">
    <location>
        <begin position="230"/>
        <end position="253"/>
    </location>
</feature>
<feature type="topological domain" description="Cytoplasmic" evidence="1">
    <location>
        <begin position="254"/>
        <end position="608"/>
    </location>
</feature>
<feature type="domain" description="Fibronectin type-III 1" evidence="3">
    <location>
        <begin position="22"/>
        <end position="122"/>
    </location>
</feature>
<feature type="domain" description="Fibronectin type-III 2" evidence="3">
    <location>
        <begin position="124"/>
        <end position="224"/>
    </location>
</feature>
<feature type="region of interest" description="Disordered" evidence="4">
    <location>
        <begin position="317"/>
        <end position="355"/>
    </location>
</feature>
<feature type="region of interest" description="Disordered" evidence="4">
    <location>
        <begin position="377"/>
        <end position="419"/>
    </location>
</feature>
<feature type="region of interest" description="Disordered" evidence="4">
    <location>
        <begin position="466"/>
        <end position="487"/>
    </location>
</feature>
<feature type="short sequence motif" description="WSXWS motif">
    <location>
        <begin position="210"/>
        <end position="214"/>
    </location>
</feature>
<feature type="short sequence motif" description="Box 1 motif">
    <location>
        <begin position="262"/>
        <end position="270"/>
    </location>
</feature>
<feature type="compositionally biased region" description="Basic and acidic residues" evidence="4">
    <location>
        <begin position="318"/>
        <end position="327"/>
    </location>
</feature>
<feature type="compositionally biased region" description="Low complexity" evidence="4">
    <location>
        <begin position="345"/>
        <end position="354"/>
    </location>
</feature>
<feature type="compositionally biased region" description="Polar residues" evidence="4">
    <location>
        <begin position="398"/>
        <end position="408"/>
    </location>
</feature>
<feature type="binding site" evidence="1">
    <location>
        <position position="206"/>
    </location>
    <ligand>
        <name>Zn(2+)</name>
        <dbReference type="ChEBI" id="CHEBI:29105"/>
    </ligand>
</feature>
<feature type="binding site" evidence="1">
    <location>
        <position position="207"/>
    </location>
    <ligand>
        <name>Zn(2+)</name>
        <dbReference type="ChEBI" id="CHEBI:29105"/>
    </ligand>
</feature>
<feature type="glycosylation site" description="N-linked (GlcNAc...) asparagine" evidence="2">
    <location>
        <position position="54"/>
    </location>
</feature>
<feature type="glycosylation site" description="N-linked (GlcNAc...) asparagine" evidence="2">
    <location>
        <position position="99"/>
    </location>
</feature>
<feature type="glycosylation site" description="N-linked (GlcNAc...) asparagine" evidence="2">
    <location>
        <position position="127"/>
    </location>
</feature>
<feature type="disulfide bond" evidence="1">
    <location>
        <begin position="31"/>
        <end position="41"/>
    </location>
</feature>
<feature type="disulfide bond" evidence="1">
    <location>
        <begin position="70"/>
        <end position="81"/>
    </location>
</feature>
<feature type="splice variant" id="VSP_001723" description="In isoform PRL-R1." evidence="5">
    <original>KGKSEELLSALGCQDFPPTSDCE</original>
    <variation>LWCSILQLTSLVKIPTTEFLCDL</variation>
    <location>
        <begin position="281"/>
        <end position="303"/>
    </location>
</feature>
<feature type="splice variant" id="VSP_001721" description="In isoform PRL-R2." evidence="5">
    <original>KGKSEELLSALG</original>
    <variation>VHNKEQLENYVY</variation>
    <location>
        <begin position="281"/>
        <end position="292"/>
    </location>
</feature>
<feature type="splice variant" id="VSP_001722" description="In isoform PRL-R2." evidence="5">
    <location>
        <begin position="293"/>
        <end position="608"/>
    </location>
</feature>
<feature type="splice variant" id="VSP_001724" description="In isoform PRL-R1." evidence="5">
    <location>
        <begin position="304"/>
        <end position="608"/>
    </location>
</feature>
<feature type="sequence conflict" description="In Ref. 2; CAA51789." evidence="6" ref="2">
    <original>L</original>
    <variation>F</variation>
    <location>
        <position position="558"/>
    </location>
</feature>
<evidence type="ECO:0000250" key="1"/>
<evidence type="ECO:0000255" key="2"/>
<evidence type="ECO:0000255" key="3">
    <source>
        <dbReference type="PROSITE-ProRule" id="PRU00316"/>
    </source>
</evidence>
<evidence type="ECO:0000256" key="4">
    <source>
        <dbReference type="SAM" id="MobiDB-lite"/>
    </source>
</evidence>
<evidence type="ECO:0000303" key="5">
    <source>
    </source>
</evidence>
<evidence type="ECO:0000305" key="6"/>
<dbReference type="EMBL" id="L13593">
    <property type="protein sequence ID" value="AAC37641.1"/>
    <property type="molecule type" value="mRNA"/>
</dbReference>
<dbReference type="EMBL" id="L14811">
    <property type="protein sequence ID" value="AAA02686.1"/>
    <property type="molecule type" value="mRNA"/>
</dbReference>
<dbReference type="EMBL" id="D10214">
    <property type="protein sequence ID" value="BAA01066.1"/>
    <property type="molecule type" value="mRNA"/>
</dbReference>
<dbReference type="EMBL" id="X73372">
    <property type="protein sequence ID" value="CAA51789.1"/>
    <property type="molecule type" value="mRNA"/>
</dbReference>
<dbReference type="EMBL" id="M22959">
    <property type="protein sequence ID" value="AAA39977.1"/>
    <property type="molecule type" value="mRNA"/>
</dbReference>
<dbReference type="EMBL" id="M22958">
    <property type="protein sequence ID" value="AAA39976.1"/>
    <property type="molecule type" value="mRNA"/>
</dbReference>
<dbReference type="CCDS" id="CCDS27377.1">
    <molecule id="Q08501-1"/>
</dbReference>
<dbReference type="CCDS" id="CCDS56975.1">
    <molecule id="Q08501-2"/>
</dbReference>
<dbReference type="PIR" id="I53269">
    <property type="entry name" value="I53269"/>
</dbReference>
<dbReference type="PIR" id="I77524">
    <property type="entry name" value="I77524"/>
</dbReference>
<dbReference type="PIR" id="I77525">
    <property type="entry name" value="I77525"/>
</dbReference>
<dbReference type="RefSeq" id="NP_001240711.1">
    <molecule id="Q08501-2"/>
    <property type="nucleotide sequence ID" value="NM_001253782.2"/>
</dbReference>
<dbReference type="RefSeq" id="NP_035299.4">
    <molecule id="Q08501-1"/>
    <property type="nucleotide sequence ID" value="NM_011169.5"/>
</dbReference>
<dbReference type="RefSeq" id="XP_006520097.1">
    <molecule id="Q08501-1"/>
    <property type="nucleotide sequence ID" value="XM_006520034.3"/>
</dbReference>
<dbReference type="RefSeq" id="XP_006520098.1">
    <molecule id="Q08501-1"/>
    <property type="nucleotide sequence ID" value="XM_006520035.1"/>
</dbReference>
<dbReference type="RefSeq" id="XP_006520099.1">
    <molecule id="Q08501-1"/>
    <property type="nucleotide sequence ID" value="XM_006520036.1"/>
</dbReference>
<dbReference type="RefSeq" id="XP_006520100.1">
    <molecule id="Q08501-1"/>
    <property type="nucleotide sequence ID" value="XM_006520037.4"/>
</dbReference>
<dbReference type="RefSeq" id="XP_006520101.1">
    <molecule id="Q08501-2"/>
    <property type="nucleotide sequence ID" value="XM_006520038.2"/>
</dbReference>
<dbReference type="SMR" id="Q08501"/>
<dbReference type="BioGRID" id="202385">
    <property type="interactions" value="6"/>
</dbReference>
<dbReference type="FunCoup" id="Q08501">
    <property type="interactions" value="1026"/>
</dbReference>
<dbReference type="IntAct" id="Q08501">
    <property type="interactions" value="3"/>
</dbReference>
<dbReference type="MINT" id="Q08501"/>
<dbReference type="STRING" id="10090.ENSMUSP00000122219"/>
<dbReference type="GuidetoPHARMACOLOGY" id="1721"/>
<dbReference type="GlyCosmos" id="Q08501">
    <property type="glycosylation" value="3 sites, No reported glycans"/>
</dbReference>
<dbReference type="GlyGen" id="Q08501">
    <property type="glycosylation" value="4 sites"/>
</dbReference>
<dbReference type="iPTMnet" id="Q08501"/>
<dbReference type="PhosphoSitePlus" id="Q08501"/>
<dbReference type="PaxDb" id="10090-ENSMUSP00000122219"/>
<dbReference type="ProteomicsDB" id="291814">
    <molecule id="Q08501-1"/>
</dbReference>
<dbReference type="ProteomicsDB" id="291815">
    <molecule id="Q08501-2"/>
</dbReference>
<dbReference type="ProteomicsDB" id="291816">
    <molecule id="Q08501-3"/>
</dbReference>
<dbReference type="DNASU" id="19116"/>
<dbReference type="Ensembl" id="ENSMUST00000124470.8">
    <molecule id="Q08501-1"/>
    <property type="protein sequence ID" value="ENSMUSP00000122219.2"/>
    <property type="gene ID" value="ENSMUSG00000005268.21"/>
</dbReference>
<dbReference type="Ensembl" id="ENSMUST00000128450.8">
    <molecule id="Q08501-3"/>
    <property type="protein sequence ID" value="ENSMUSP00000122209.2"/>
    <property type="gene ID" value="ENSMUSG00000005268.21"/>
</dbReference>
<dbReference type="Ensembl" id="ENSMUST00000137867.8">
    <molecule id="Q08501-3"/>
    <property type="protein sequence ID" value="ENSMUSP00000121935.2"/>
    <property type="gene ID" value="ENSMUSG00000005268.21"/>
</dbReference>
<dbReference type="Ensembl" id="ENSMUST00000148257.8">
    <molecule id="Q08501-2"/>
    <property type="protein sequence ID" value="ENSMUSP00000118355.2"/>
    <property type="gene ID" value="ENSMUSG00000005268.21"/>
</dbReference>
<dbReference type="GeneID" id="19116"/>
<dbReference type="KEGG" id="mmu:19116"/>
<dbReference type="UCSC" id="uc007vfw.2">
    <molecule id="Q08501-3"/>
    <property type="organism name" value="mouse"/>
</dbReference>
<dbReference type="UCSC" id="uc007vfy.2">
    <molecule id="Q08501-1"/>
    <property type="organism name" value="mouse"/>
</dbReference>
<dbReference type="UCSC" id="uc029snt.1">
    <molecule id="Q08501-2"/>
    <property type="organism name" value="mouse"/>
</dbReference>
<dbReference type="AGR" id="MGI:97763"/>
<dbReference type="CTD" id="5618"/>
<dbReference type="MGI" id="MGI:97763">
    <property type="gene designation" value="Prlr"/>
</dbReference>
<dbReference type="VEuPathDB" id="HostDB:ENSMUSG00000005268"/>
<dbReference type="eggNOG" id="ENOG502R22A">
    <property type="taxonomic scope" value="Eukaryota"/>
</dbReference>
<dbReference type="GeneTree" id="ENSGT00940000154851"/>
<dbReference type="HOGENOM" id="CLU_017892_2_0_1"/>
<dbReference type="InParanoid" id="Q08501"/>
<dbReference type="OMA" id="ANITCTW"/>
<dbReference type="OrthoDB" id="8858139at2759"/>
<dbReference type="PhylomeDB" id="Q08501"/>
<dbReference type="TreeFam" id="TF330851"/>
<dbReference type="Reactome" id="R-MMU-1170546">
    <property type="pathway name" value="Prolactin receptor signaling"/>
</dbReference>
<dbReference type="Reactome" id="R-MMU-982772">
    <property type="pathway name" value="Growth hormone receptor signaling"/>
</dbReference>
<dbReference type="BioGRID-ORCS" id="19116">
    <property type="hits" value="6 hits in 77 CRISPR screens"/>
</dbReference>
<dbReference type="ChiTaRS" id="Prlr">
    <property type="organism name" value="mouse"/>
</dbReference>
<dbReference type="PRO" id="PR:Q08501"/>
<dbReference type="Proteomes" id="UP000000589">
    <property type="component" value="Chromosome 15"/>
</dbReference>
<dbReference type="RNAct" id="Q08501">
    <property type="molecule type" value="protein"/>
</dbReference>
<dbReference type="Bgee" id="ENSMUSG00000005268">
    <property type="expression patterns" value="Expressed in choroid plexus epithelium and 151 other cell types or tissues"/>
</dbReference>
<dbReference type="ExpressionAtlas" id="Q08501">
    <property type="expression patterns" value="baseline and differential"/>
</dbReference>
<dbReference type="GO" id="GO:0009986">
    <property type="term" value="C:cell surface"/>
    <property type="evidence" value="ECO:0007669"/>
    <property type="project" value="Ensembl"/>
</dbReference>
<dbReference type="GO" id="GO:0016020">
    <property type="term" value="C:membrane"/>
    <property type="evidence" value="ECO:0007669"/>
    <property type="project" value="UniProtKB-SubCell"/>
</dbReference>
<dbReference type="GO" id="GO:0008289">
    <property type="term" value="F:lipid binding"/>
    <property type="evidence" value="ECO:0007669"/>
    <property type="project" value="Ensembl"/>
</dbReference>
<dbReference type="GO" id="GO:0046872">
    <property type="term" value="F:metal ion binding"/>
    <property type="evidence" value="ECO:0007669"/>
    <property type="project" value="UniProtKB-KW"/>
</dbReference>
<dbReference type="GO" id="GO:0017046">
    <property type="term" value="F:peptide hormone binding"/>
    <property type="evidence" value="ECO:0007669"/>
    <property type="project" value="Ensembl"/>
</dbReference>
<dbReference type="GO" id="GO:0004925">
    <property type="term" value="F:prolactin receptor activity"/>
    <property type="evidence" value="ECO:0000314"/>
    <property type="project" value="MGI"/>
</dbReference>
<dbReference type="GO" id="GO:0019901">
    <property type="term" value="F:protein kinase binding"/>
    <property type="evidence" value="ECO:0007669"/>
    <property type="project" value="Ensembl"/>
</dbReference>
<dbReference type="GO" id="GO:0007259">
    <property type="term" value="P:cell surface receptor signaling pathway via JAK-STAT"/>
    <property type="evidence" value="ECO:0000315"/>
    <property type="project" value="MGI"/>
</dbReference>
<dbReference type="GO" id="GO:0097011">
    <property type="term" value="P:cellular response to granulocyte macrophage colony-stimulating factor stimulus"/>
    <property type="evidence" value="ECO:0007669"/>
    <property type="project" value="Ensembl"/>
</dbReference>
<dbReference type="GO" id="GO:0007595">
    <property type="term" value="P:lactation"/>
    <property type="evidence" value="ECO:0000315"/>
    <property type="project" value="MGI"/>
</dbReference>
<dbReference type="GO" id="GO:0060749">
    <property type="term" value="P:mammary gland alveolus development"/>
    <property type="evidence" value="ECO:0000315"/>
    <property type="project" value="MGI"/>
</dbReference>
<dbReference type="GO" id="GO:0060644">
    <property type="term" value="P:mammary gland epithelial cell differentiation"/>
    <property type="evidence" value="ECO:0000316"/>
    <property type="project" value="MGI"/>
</dbReference>
<dbReference type="GO" id="GO:0061180">
    <property type="term" value="P:mammary gland epithelium development"/>
    <property type="evidence" value="ECO:0000315"/>
    <property type="project" value="MGI"/>
</dbReference>
<dbReference type="GO" id="GO:0043066">
    <property type="term" value="P:negative regulation of apoptotic process"/>
    <property type="evidence" value="ECO:0007669"/>
    <property type="project" value="Ensembl"/>
</dbReference>
<dbReference type="GO" id="GO:0030890">
    <property type="term" value="P:positive regulation of B cell proliferation"/>
    <property type="evidence" value="ECO:0007669"/>
    <property type="project" value="Ensembl"/>
</dbReference>
<dbReference type="GO" id="GO:0120162">
    <property type="term" value="P:positive regulation of cold-induced thermogenesis"/>
    <property type="evidence" value="ECO:0000315"/>
    <property type="project" value="YuBioLab"/>
</dbReference>
<dbReference type="GO" id="GO:0060736">
    <property type="term" value="P:prostate gland growth"/>
    <property type="evidence" value="ECO:0000315"/>
    <property type="project" value="MGI"/>
</dbReference>
<dbReference type="GO" id="GO:0030155">
    <property type="term" value="P:regulation of cell adhesion"/>
    <property type="evidence" value="ECO:0000315"/>
    <property type="project" value="MGI"/>
</dbReference>
<dbReference type="GO" id="GO:0030856">
    <property type="term" value="P:regulation of epithelial cell differentiation"/>
    <property type="evidence" value="ECO:0000315"/>
    <property type="project" value="MGI"/>
</dbReference>
<dbReference type="GO" id="GO:0009617">
    <property type="term" value="P:response to bacterium"/>
    <property type="evidence" value="ECO:0000270"/>
    <property type="project" value="MGI"/>
</dbReference>
<dbReference type="CDD" id="cd00063">
    <property type="entry name" value="FN3"/>
    <property type="match status" value="1"/>
</dbReference>
<dbReference type="FunFam" id="2.60.40.10:FF:000287">
    <property type="entry name" value="Prolactin receptor"/>
    <property type="match status" value="1"/>
</dbReference>
<dbReference type="FunFam" id="2.60.40.10:FF:000358">
    <property type="entry name" value="Prolactin receptor"/>
    <property type="match status" value="1"/>
</dbReference>
<dbReference type="Gene3D" id="2.60.40.10">
    <property type="entry name" value="Immunoglobulins"/>
    <property type="match status" value="2"/>
</dbReference>
<dbReference type="InterPro" id="IPR003961">
    <property type="entry name" value="FN3_dom"/>
</dbReference>
<dbReference type="InterPro" id="IPR036116">
    <property type="entry name" value="FN3_sf"/>
</dbReference>
<dbReference type="InterPro" id="IPR015152">
    <property type="entry name" value="Growth/epo_recpt_lig-bind"/>
</dbReference>
<dbReference type="InterPro" id="IPR013783">
    <property type="entry name" value="Ig-like_fold"/>
</dbReference>
<dbReference type="InterPro" id="IPR003528">
    <property type="entry name" value="Long_hematopoietin_rcpt_CS"/>
</dbReference>
<dbReference type="InterPro" id="IPR050379">
    <property type="entry name" value="Type-I_Cytokine_Rcpt"/>
</dbReference>
<dbReference type="PANTHER" id="PTHR23036">
    <property type="entry name" value="CYTOKINE RECEPTOR"/>
    <property type="match status" value="1"/>
</dbReference>
<dbReference type="PANTHER" id="PTHR23036:SF86">
    <property type="entry name" value="PROLACTIN RECEPTOR"/>
    <property type="match status" value="1"/>
</dbReference>
<dbReference type="Pfam" id="PF09067">
    <property type="entry name" value="EpoR_lig-bind"/>
    <property type="match status" value="1"/>
</dbReference>
<dbReference type="SMART" id="SM00060">
    <property type="entry name" value="FN3"/>
    <property type="match status" value="2"/>
</dbReference>
<dbReference type="SUPFAM" id="SSF49265">
    <property type="entry name" value="Fibronectin type III"/>
    <property type="match status" value="2"/>
</dbReference>
<dbReference type="PROSITE" id="PS50853">
    <property type="entry name" value="FN3"/>
    <property type="match status" value="2"/>
</dbReference>
<dbReference type="PROSITE" id="PS01352">
    <property type="entry name" value="HEMATOPO_REC_L_F1"/>
    <property type="match status" value="1"/>
</dbReference>
<protein>
    <recommendedName>
        <fullName>Prolactin receptor</fullName>
        <shortName>PRL-R</shortName>
    </recommendedName>
</protein>